<name>PCP_STRP6</name>
<protein>
    <recommendedName>
        <fullName>Pyrrolidone-carboxylate peptidase</fullName>
        <ecNumber>3.4.19.3</ecNumber>
    </recommendedName>
    <alternativeName>
        <fullName>5-oxoprolyl-peptidase</fullName>
    </alternativeName>
    <alternativeName>
        <fullName>Pyroglutamyl-peptidase I</fullName>
        <shortName>PGP-I</shortName>
        <shortName>Pyrase</shortName>
    </alternativeName>
</protein>
<dbReference type="EC" id="3.4.19.3"/>
<dbReference type="EMBL" id="X65717">
    <property type="protein sequence ID" value="CAA46633.1"/>
    <property type="molecule type" value="Genomic_DNA"/>
</dbReference>
<dbReference type="EMBL" id="CP000003">
    <property type="protein sequence ID" value="AAT86579.1"/>
    <property type="molecule type" value="Genomic_DNA"/>
</dbReference>
<dbReference type="PIR" id="S24717">
    <property type="entry name" value="S24717"/>
</dbReference>
<dbReference type="RefSeq" id="WP_002994169.1">
    <property type="nucleotide sequence ID" value="NC_006086.1"/>
</dbReference>
<dbReference type="SMR" id="Q5XDD4"/>
<dbReference type="MEROPS" id="C15.001"/>
<dbReference type="KEGG" id="spa:M6_Spy0444"/>
<dbReference type="HOGENOM" id="CLU_043960_4_0_9"/>
<dbReference type="Proteomes" id="UP000001167">
    <property type="component" value="Chromosome"/>
</dbReference>
<dbReference type="GO" id="GO:0005829">
    <property type="term" value="C:cytosol"/>
    <property type="evidence" value="ECO:0007669"/>
    <property type="project" value="InterPro"/>
</dbReference>
<dbReference type="GO" id="GO:0016920">
    <property type="term" value="F:pyroglutamyl-peptidase activity"/>
    <property type="evidence" value="ECO:0007669"/>
    <property type="project" value="UniProtKB-UniRule"/>
</dbReference>
<dbReference type="GO" id="GO:0006508">
    <property type="term" value="P:proteolysis"/>
    <property type="evidence" value="ECO:0007669"/>
    <property type="project" value="UniProtKB-KW"/>
</dbReference>
<dbReference type="CDD" id="cd00501">
    <property type="entry name" value="Peptidase_C15"/>
    <property type="match status" value="1"/>
</dbReference>
<dbReference type="FunFam" id="3.40.630.20:FF:000001">
    <property type="entry name" value="Pyrrolidone-carboxylate peptidase"/>
    <property type="match status" value="1"/>
</dbReference>
<dbReference type="Gene3D" id="3.40.630.20">
    <property type="entry name" value="Peptidase C15, pyroglutamyl peptidase I-like"/>
    <property type="match status" value="1"/>
</dbReference>
<dbReference type="HAMAP" id="MF_00417">
    <property type="entry name" value="Pyrrolid_peptidase"/>
    <property type="match status" value="1"/>
</dbReference>
<dbReference type="InterPro" id="IPR000816">
    <property type="entry name" value="Peptidase_C15"/>
</dbReference>
<dbReference type="InterPro" id="IPR016125">
    <property type="entry name" value="Peptidase_C15-like"/>
</dbReference>
<dbReference type="InterPro" id="IPR036440">
    <property type="entry name" value="Peptidase_C15-like_sf"/>
</dbReference>
<dbReference type="InterPro" id="IPR029762">
    <property type="entry name" value="PGP-I_bact-type"/>
</dbReference>
<dbReference type="InterPro" id="IPR033694">
    <property type="entry name" value="PGPEP1_Cys_AS"/>
</dbReference>
<dbReference type="InterPro" id="IPR033693">
    <property type="entry name" value="PGPEP1_Glu_AS"/>
</dbReference>
<dbReference type="NCBIfam" id="NF009676">
    <property type="entry name" value="PRK13197.1"/>
    <property type="match status" value="1"/>
</dbReference>
<dbReference type="NCBIfam" id="TIGR00504">
    <property type="entry name" value="pyro_pdase"/>
    <property type="match status" value="1"/>
</dbReference>
<dbReference type="PANTHER" id="PTHR23402">
    <property type="entry name" value="PROTEASE FAMILY C15 PYROGLUTAMYL-PEPTIDASE I-RELATED"/>
    <property type="match status" value="1"/>
</dbReference>
<dbReference type="PANTHER" id="PTHR23402:SF1">
    <property type="entry name" value="PYROGLUTAMYL-PEPTIDASE I"/>
    <property type="match status" value="1"/>
</dbReference>
<dbReference type="Pfam" id="PF01470">
    <property type="entry name" value="Peptidase_C15"/>
    <property type="match status" value="1"/>
</dbReference>
<dbReference type="PIRSF" id="PIRSF015592">
    <property type="entry name" value="Prld-crbxl_pptds"/>
    <property type="match status" value="1"/>
</dbReference>
<dbReference type="PRINTS" id="PR00706">
    <property type="entry name" value="PYROGLUPTASE"/>
</dbReference>
<dbReference type="SUPFAM" id="SSF53182">
    <property type="entry name" value="Pyrrolidone carboxyl peptidase (pyroglutamate aminopeptidase)"/>
    <property type="match status" value="1"/>
</dbReference>
<dbReference type="PROSITE" id="PS01334">
    <property type="entry name" value="PYRASE_CYS"/>
    <property type="match status" value="1"/>
</dbReference>
<dbReference type="PROSITE" id="PS01333">
    <property type="entry name" value="PYRASE_GLU"/>
    <property type="match status" value="1"/>
</dbReference>
<reference key="1">
    <citation type="journal article" date="1992" name="Mol. Microbiol.">
        <title>Molecular characterization of pcp, the structural gene encoding the pyrrolidone carboxylyl peptidase from Streptococcus pyogenes.</title>
        <authorList>
            <person name="Cleuziat P."/>
            <person name="Robert-Baudouy J."/>
        </authorList>
    </citation>
    <scope>NUCLEOTIDE SEQUENCE [GENOMIC DNA]</scope>
    <source>
        <strain>D471 / Serotype M6</strain>
    </source>
</reference>
<reference key="2">
    <citation type="journal article" date="2004" name="J. Infect. Dis.">
        <title>Progress toward characterization of the group A Streptococcus metagenome: complete genome sequence of a macrolide-resistant serotype M6 strain.</title>
        <authorList>
            <person name="Banks D.J."/>
            <person name="Porcella S.F."/>
            <person name="Barbian K.D."/>
            <person name="Beres S.B."/>
            <person name="Philips L.E."/>
            <person name="Voyich J.M."/>
            <person name="DeLeo F.R."/>
            <person name="Martin J.M."/>
            <person name="Somerville G.A."/>
            <person name="Musser J.M."/>
        </authorList>
    </citation>
    <scope>NUCLEOTIDE SEQUENCE [LARGE SCALE GENOMIC DNA]</scope>
    <source>
        <strain>ATCC BAA-946 / MGAS10394</strain>
    </source>
</reference>
<reference key="3">
    <citation type="submission" date="2000-05" db="UniProtKB">
        <title>Two-dimensional gel electrophoresis map of Streptococcus pyogenes proteins.</title>
        <authorList>
            <person name="Hogan D.A."/>
            <person name="Du P."/>
            <person name="Stevenson T.I."/>
            <person name="Whitton M."/>
            <person name="Kilby G.W."/>
            <person name="Rogers J."/>
            <person name="VanBogelen R.A."/>
        </authorList>
    </citation>
    <scope>PROTEIN SEQUENCE OF 3-24; 80-103 AND 190-204</scope>
    <scope>MASS SPECTROMETRY</scope>
    <source>
        <strain>JRS4 / Serotype M6</strain>
    </source>
</reference>
<accession>Q5XDD4</accession>
<accession>Q01328</accession>
<proteinExistence type="evidence at protein level"/>
<feature type="chain" id="PRO_0000184744" description="Pyrrolidone-carboxylate peptidase">
    <location>
        <begin position="1"/>
        <end position="215"/>
    </location>
</feature>
<feature type="active site" evidence="1">
    <location>
        <position position="78"/>
    </location>
</feature>
<feature type="active site" evidence="1">
    <location>
        <position position="141"/>
    </location>
</feature>
<feature type="active site" evidence="1">
    <location>
        <position position="165"/>
    </location>
</feature>
<gene>
    <name type="primary">pcp</name>
    <name type="ordered locus">M6_Spy0444</name>
</gene>
<sequence>MKILVTGFDPFGGEAINPALEAIKKLPATIHGAEIKCIEVPTVFQKSADVLQQHIESFQPDAVLCIGQAGGRTGLTPERVAINQDDARIPDNEGNQPIDTPIRADGKAAYFSTLPIKAMVAAIHQAGLPASVSNTAGTFVCNHLMYQALYLVDKYCPNAKAGFMHIPFMMEQVVDKPNTAAMNLDDITRGIEAAIFAIVDFKDRSDLKRVGGATH</sequence>
<comment type="function">
    <text>Removes 5-oxoproline from various penultimate amino acid residues except L-proline.</text>
</comment>
<comment type="catalytic activity">
    <reaction>
        <text>Release of an N-terminal pyroglutamyl group from a polypeptide, the second amino acid generally not being Pro.</text>
        <dbReference type="EC" id="3.4.19.3"/>
    </reaction>
</comment>
<comment type="subunit">
    <text evidence="1">Homotetramer.</text>
</comment>
<comment type="subcellular location">
    <subcellularLocation>
        <location>Cytoplasm</location>
    </subcellularLocation>
</comment>
<comment type="mass spectrometry"/>
<comment type="similarity">
    <text evidence="3">Belongs to the peptidase C15 family.</text>
</comment>
<organism>
    <name type="scientific">Streptococcus pyogenes serotype M6 (strain ATCC BAA-946 / MGAS10394)</name>
    <dbReference type="NCBI Taxonomy" id="286636"/>
    <lineage>
        <taxon>Bacteria</taxon>
        <taxon>Bacillati</taxon>
        <taxon>Bacillota</taxon>
        <taxon>Bacilli</taxon>
        <taxon>Lactobacillales</taxon>
        <taxon>Streptococcaceae</taxon>
        <taxon>Streptococcus</taxon>
    </lineage>
</organism>
<evidence type="ECO:0000250" key="1"/>
<evidence type="ECO:0000269" key="2">
    <source ref="3"/>
</evidence>
<evidence type="ECO:0000305" key="3"/>
<keyword id="KW-0963">Cytoplasm</keyword>
<keyword id="KW-0903">Direct protein sequencing</keyword>
<keyword id="KW-0378">Hydrolase</keyword>
<keyword id="KW-0645">Protease</keyword>
<keyword id="KW-0788">Thiol protease</keyword>